<sequence length="251" mass="28313">MARRTKIYEGKAKILYEGPEPGTIVQYFKDDATAFNAQKKDVIEGKGVLNNRLSEYFMTGLAQIGVPTHFIRRLNMREQLVRACEIVPLEVIVRNFAAGTMSKRLGIEEGTQLPRPIVEYCLKNDELGDPLVTEEHIAAFGWASQQDMDDILSLALRVNDYLSGLMYGVGIKLVDFKIEIGRVYENDYPRLIIADEISPDSCRLWDIATGQKLDKDVFRRDLGSLTDAYSEVARRLGVIPKTQIAKPTLIN</sequence>
<protein>
    <recommendedName>
        <fullName evidence="1">Phosphoribosylaminoimidazole-succinocarboxamide synthase</fullName>
        <ecNumber evidence="1">6.3.2.6</ecNumber>
    </recommendedName>
    <alternativeName>
        <fullName evidence="1">SAICAR synthetase</fullName>
    </alternativeName>
</protein>
<comment type="catalytic activity">
    <reaction evidence="1">
        <text>5-amino-1-(5-phospho-D-ribosyl)imidazole-4-carboxylate + L-aspartate + ATP = (2S)-2-[5-amino-1-(5-phospho-beta-D-ribosyl)imidazole-4-carboxamido]succinate + ADP + phosphate + 2 H(+)</text>
        <dbReference type="Rhea" id="RHEA:22628"/>
        <dbReference type="ChEBI" id="CHEBI:15378"/>
        <dbReference type="ChEBI" id="CHEBI:29991"/>
        <dbReference type="ChEBI" id="CHEBI:30616"/>
        <dbReference type="ChEBI" id="CHEBI:43474"/>
        <dbReference type="ChEBI" id="CHEBI:58443"/>
        <dbReference type="ChEBI" id="CHEBI:77657"/>
        <dbReference type="ChEBI" id="CHEBI:456216"/>
        <dbReference type="EC" id="6.3.2.6"/>
    </reaction>
</comment>
<comment type="pathway">
    <text evidence="1">Purine metabolism; IMP biosynthesis via de novo pathway; 5-amino-1-(5-phospho-D-ribosyl)imidazole-4-carboxamide from 5-amino-1-(5-phospho-D-ribosyl)imidazole-4-carboxylate: step 1/2.</text>
</comment>
<comment type="similarity">
    <text evidence="1">Belongs to the SAICAR synthetase family.</text>
</comment>
<feature type="chain" id="PRO_1000018781" description="Phosphoribosylaminoimidazole-succinocarboxamide synthase">
    <location>
        <begin position="1"/>
        <end position="251"/>
    </location>
</feature>
<keyword id="KW-0067">ATP-binding</keyword>
<keyword id="KW-0436">Ligase</keyword>
<keyword id="KW-0547">Nucleotide-binding</keyword>
<keyword id="KW-0658">Purine biosynthesis</keyword>
<keyword id="KW-1185">Reference proteome</keyword>
<proteinExistence type="inferred from homology"/>
<accession>Q5LS81</accession>
<organism>
    <name type="scientific">Ruegeria pomeroyi (strain ATCC 700808 / DSM 15171 / DSS-3)</name>
    <name type="common">Silicibacter pomeroyi</name>
    <dbReference type="NCBI Taxonomy" id="246200"/>
    <lineage>
        <taxon>Bacteria</taxon>
        <taxon>Pseudomonadati</taxon>
        <taxon>Pseudomonadota</taxon>
        <taxon>Alphaproteobacteria</taxon>
        <taxon>Rhodobacterales</taxon>
        <taxon>Roseobacteraceae</taxon>
        <taxon>Ruegeria</taxon>
    </lineage>
</organism>
<reference key="1">
    <citation type="journal article" date="2004" name="Nature">
        <title>Genome sequence of Silicibacter pomeroyi reveals adaptations to the marine environment.</title>
        <authorList>
            <person name="Moran M.A."/>
            <person name="Buchan A."/>
            <person name="Gonzalez J.M."/>
            <person name="Heidelberg J.F."/>
            <person name="Whitman W.B."/>
            <person name="Kiene R.P."/>
            <person name="Henriksen J.R."/>
            <person name="King G.M."/>
            <person name="Belas R."/>
            <person name="Fuqua C."/>
            <person name="Brinkac L.M."/>
            <person name="Lewis M."/>
            <person name="Johri S."/>
            <person name="Weaver B."/>
            <person name="Pai G."/>
            <person name="Eisen J.A."/>
            <person name="Rahe E."/>
            <person name="Sheldon W.M."/>
            <person name="Ye W."/>
            <person name="Miller T.R."/>
            <person name="Carlton J."/>
            <person name="Rasko D.A."/>
            <person name="Paulsen I.T."/>
            <person name="Ren Q."/>
            <person name="Daugherty S.C."/>
            <person name="DeBoy R.T."/>
            <person name="Dodson R.J."/>
            <person name="Durkin A.S."/>
            <person name="Madupu R."/>
            <person name="Nelson W.C."/>
            <person name="Sullivan S.A."/>
            <person name="Rosovitz M.J."/>
            <person name="Haft D.H."/>
            <person name="Selengut J."/>
            <person name="Ward N."/>
        </authorList>
    </citation>
    <scope>NUCLEOTIDE SEQUENCE [LARGE SCALE GENOMIC DNA]</scope>
    <source>
        <strain>ATCC 700808 / DSM 15171 / DSS-3</strain>
    </source>
</reference>
<reference key="2">
    <citation type="journal article" date="2014" name="Stand. Genomic Sci.">
        <title>An updated genome annotation for the model marine bacterium Ruegeria pomeroyi DSS-3.</title>
        <authorList>
            <person name="Rivers A.R."/>
            <person name="Smith C.B."/>
            <person name="Moran M.A."/>
        </authorList>
    </citation>
    <scope>GENOME REANNOTATION</scope>
    <source>
        <strain>ATCC 700808 / DSM 15171 / DSS-3</strain>
    </source>
</reference>
<gene>
    <name evidence="1" type="primary">purC</name>
    <name type="ordered locus">SPO1887</name>
</gene>
<dbReference type="EC" id="6.3.2.6" evidence="1"/>
<dbReference type="EMBL" id="CP000031">
    <property type="protein sequence ID" value="AAV95166.1"/>
    <property type="molecule type" value="Genomic_DNA"/>
</dbReference>
<dbReference type="RefSeq" id="WP_011047620.1">
    <property type="nucleotide sequence ID" value="NC_003911.12"/>
</dbReference>
<dbReference type="SMR" id="Q5LS81"/>
<dbReference type="STRING" id="246200.SPO1887"/>
<dbReference type="PaxDb" id="246200-SPO1887"/>
<dbReference type="KEGG" id="sil:SPO1887"/>
<dbReference type="eggNOG" id="COG0152">
    <property type="taxonomic scope" value="Bacteria"/>
</dbReference>
<dbReference type="HOGENOM" id="CLU_061495_2_0_5"/>
<dbReference type="OrthoDB" id="9801549at2"/>
<dbReference type="UniPathway" id="UPA00074">
    <property type="reaction ID" value="UER00131"/>
</dbReference>
<dbReference type="Proteomes" id="UP000001023">
    <property type="component" value="Chromosome"/>
</dbReference>
<dbReference type="GO" id="GO:0005829">
    <property type="term" value="C:cytosol"/>
    <property type="evidence" value="ECO:0007669"/>
    <property type="project" value="TreeGrafter"/>
</dbReference>
<dbReference type="GO" id="GO:0005524">
    <property type="term" value="F:ATP binding"/>
    <property type="evidence" value="ECO:0007669"/>
    <property type="project" value="UniProtKB-KW"/>
</dbReference>
<dbReference type="GO" id="GO:0004639">
    <property type="term" value="F:phosphoribosylaminoimidazolesuccinocarboxamide synthase activity"/>
    <property type="evidence" value="ECO:0007669"/>
    <property type="project" value="UniProtKB-UniRule"/>
</dbReference>
<dbReference type="GO" id="GO:0006189">
    <property type="term" value="P:'de novo' IMP biosynthetic process"/>
    <property type="evidence" value="ECO:0007669"/>
    <property type="project" value="UniProtKB-UniRule"/>
</dbReference>
<dbReference type="GO" id="GO:0009236">
    <property type="term" value="P:cobalamin biosynthetic process"/>
    <property type="evidence" value="ECO:0007669"/>
    <property type="project" value="InterPro"/>
</dbReference>
<dbReference type="CDD" id="cd01415">
    <property type="entry name" value="SAICAR_synt_PurC"/>
    <property type="match status" value="1"/>
</dbReference>
<dbReference type="FunFam" id="3.30.470.20:FF:000006">
    <property type="entry name" value="Phosphoribosylaminoimidazole-succinocarboxamide synthase"/>
    <property type="match status" value="1"/>
</dbReference>
<dbReference type="Gene3D" id="3.30.470.20">
    <property type="entry name" value="ATP-grasp fold, B domain"/>
    <property type="match status" value="1"/>
</dbReference>
<dbReference type="Gene3D" id="3.30.200.20">
    <property type="entry name" value="Phosphorylase Kinase, domain 1"/>
    <property type="match status" value="1"/>
</dbReference>
<dbReference type="HAMAP" id="MF_00137">
    <property type="entry name" value="SAICAR_synth"/>
    <property type="match status" value="1"/>
</dbReference>
<dbReference type="InterPro" id="IPR028923">
    <property type="entry name" value="SAICAR_synt/ADE2_N"/>
</dbReference>
<dbReference type="InterPro" id="IPR033934">
    <property type="entry name" value="SAICAR_synt_PurC"/>
</dbReference>
<dbReference type="InterPro" id="IPR001636">
    <property type="entry name" value="SAICAR_synth"/>
</dbReference>
<dbReference type="InterPro" id="IPR050089">
    <property type="entry name" value="SAICAR_synthetase"/>
</dbReference>
<dbReference type="InterPro" id="IPR018236">
    <property type="entry name" value="SAICAR_synthetase_CS"/>
</dbReference>
<dbReference type="NCBIfam" id="TIGR00081">
    <property type="entry name" value="purC"/>
    <property type="match status" value="1"/>
</dbReference>
<dbReference type="PANTHER" id="PTHR43599">
    <property type="entry name" value="MULTIFUNCTIONAL PROTEIN ADE2"/>
    <property type="match status" value="1"/>
</dbReference>
<dbReference type="PANTHER" id="PTHR43599:SF3">
    <property type="entry name" value="SI:DKEY-6E2.2"/>
    <property type="match status" value="1"/>
</dbReference>
<dbReference type="Pfam" id="PF01259">
    <property type="entry name" value="SAICAR_synt"/>
    <property type="match status" value="1"/>
</dbReference>
<dbReference type="SUPFAM" id="SSF56104">
    <property type="entry name" value="SAICAR synthase-like"/>
    <property type="match status" value="1"/>
</dbReference>
<dbReference type="PROSITE" id="PS01057">
    <property type="entry name" value="SAICAR_SYNTHETASE_1"/>
    <property type="match status" value="1"/>
</dbReference>
<dbReference type="PROSITE" id="PS01058">
    <property type="entry name" value="SAICAR_SYNTHETASE_2"/>
    <property type="match status" value="1"/>
</dbReference>
<name>PUR7_RUEPO</name>
<evidence type="ECO:0000255" key="1">
    <source>
        <dbReference type="HAMAP-Rule" id="MF_00137"/>
    </source>
</evidence>